<keyword id="KW-0029">Amino-acid transport</keyword>
<keyword id="KW-0997">Cell inner membrane</keyword>
<keyword id="KW-1003">Cell membrane</keyword>
<keyword id="KW-0472">Membrane</keyword>
<keyword id="KW-1185">Reference proteome</keyword>
<keyword id="KW-0677">Repeat</keyword>
<keyword id="KW-0812">Transmembrane</keyword>
<keyword id="KW-1133">Transmembrane helix</keyword>
<keyword id="KW-0813">Transport</keyword>
<name>EAMA_SALTY</name>
<proteinExistence type="inferred from homology"/>
<reference key="1">
    <citation type="journal article" date="2001" name="Nature">
        <title>Complete genome sequence of Salmonella enterica serovar Typhimurium LT2.</title>
        <authorList>
            <person name="McClelland M."/>
            <person name="Sanderson K.E."/>
            <person name="Spieth J."/>
            <person name="Clifton S.W."/>
            <person name="Latreille P."/>
            <person name="Courtney L."/>
            <person name="Porwollik S."/>
            <person name="Ali J."/>
            <person name="Dante M."/>
            <person name="Du F."/>
            <person name="Hou S."/>
            <person name="Layman D."/>
            <person name="Leonard S."/>
            <person name="Nguyen C."/>
            <person name="Scott K."/>
            <person name="Holmes A."/>
            <person name="Grewal N."/>
            <person name="Mulvaney E."/>
            <person name="Ryan E."/>
            <person name="Sun H."/>
            <person name="Florea L."/>
            <person name="Miller W."/>
            <person name="Stoneking T."/>
            <person name="Nhan M."/>
            <person name="Waterston R."/>
            <person name="Wilson R.K."/>
        </authorList>
    </citation>
    <scope>NUCLEOTIDE SEQUENCE [LARGE SCALE GENOMIC DNA]</scope>
    <source>
        <strain>LT2 / SGSC1412 / ATCC 700720</strain>
    </source>
</reference>
<reference key="2">
    <citation type="journal article" date="1997" name="J. Bacteriol.">
        <title>The Salmonella typhimurium mar locus: molecular and genetic analyses and assessment of its role in virulence.</title>
        <authorList>
            <person name="Sulavik M.C."/>
            <person name="Dazer M."/>
            <person name="Miller P.F."/>
        </authorList>
    </citation>
    <scope>NUCLEOTIDE SEQUENCE [GENOMIC DNA] OF 250-299</scope>
    <source>
        <strain>X3181</strain>
    </source>
</reference>
<gene>
    <name type="primary">eamA</name>
    <name type="ordered locus">STM1517</name>
</gene>
<dbReference type="EMBL" id="AE006468">
    <property type="protein sequence ID" value="AAL20436.1"/>
    <property type="status" value="ALT_INIT"/>
    <property type="molecule type" value="Genomic_DNA"/>
</dbReference>
<dbReference type="EMBL" id="U54468">
    <property type="protein sequence ID" value="AAC44979.1"/>
    <property type="molecule type" value="Genomic_DNA"/>
</dbReference>
<dbReference type="PIR" id="T11759">
    <property type="entry name" value="T11759"/>
</dbReference>
<dbReference type="SMR" id="Q56072"/>
<dbReference type="STRING" id="99287.STM1517"/>
<dbReference type="PaxDb" id="99287-STM1517"/>
<dbReference type="KEGG" id="stm:STM1517"/>
<dbReference type="PATRIC" id="fig|99287.12.peg.1605"/>
<dbReference type="HOGENOM" id="CLU_033863_20_1_6"/>
<dbReference type="OMA" id="NTLTWPV"/>
<dbReference type="PhylomeDB" id="Q56072"/>
<dbReference type="Proteomes" id="UP000001014">
    <property type="component" value="Chromosome"/>
</dbReference>
<dbReference type="GO" id="GO:0005886">
    <property type="term" value="C:plasma membrane"/>
    <property type="evidence" value="ECO:0007669"/>
    <property type="project" value="UniProtKB-SubCell"/>
</dbReference>
<dbReference type="GO" id="GO:0006865">
    <property type="term" value="P:amino acid transport"/>
    <property type="evidence" value="ECO:0007669"/>
    <property type="project" value="UniProtKB-KW"/>
</dbReference>
<dbReference type="Gene3D" id="1.10.3730.20">
    <property type="match status" value="1"/>
</dbReference>
<dbReference type="InterPro" id="IPR050638">
    <property type="entry name" value="AA-Vitamin_Transporters"/>
</dbReference>
<dbReference type="InterPro" id="IPR000620">
    <property type="entry name" value="EamA_dom"/>
</dbReference>
<dbReference type="NCBIfam" id="NF008523">
    <property type="entry name" value="PRK11453.1"/>
    <property type="match status" value="1"/>
</dbReference>
<dbReference type="PANTHER" id="PTHR32322:SF9">
    <property type="entry name" value="AMINO-ACID METABOLITE EFFLUX PUMP-RELATED"/>
    <property type="match status" value="1"/>
</dbReference>
<dbReference type="PANTHER" id="PTHR32322">
    <property type="entry name" value="INNER MEMBRANE TRANSPORTER"/>
    <property type="match status" value="1"/>
</dbReference>
<dbReference type="Pfam" id="PF00892">
    <property type="entry name" value="EamA"/>
    <property type="match status" value="2"/>
</dbReference>
<dbReference type="SUPFAM" id="SSF103481">
    <property type="entry name" value="Multidrug resistance efflux transporter EmrE"/>
    <property type="match status" value="2"/>
</dbReference>
<sequence>MSRKDGFLALLVVVVWGLNFVVIKVGLHHMPPLLLAGLRFLLVAFPAIFFVARPKVPLTLLLGYGLTISFGQFAFLFCAIKFGMPAGLASLVLQAQAFFTMALGAFVFSERLQRKQLAGIALAIIGVLVLIEASLNGQHIAMSGFMLTLAAAFSWACGNIFNKKIMQHSPRPAVMSLVVWSALIPILPFLLSSLLLEGADHITQSLITIDMTTILSLLYLAFVATILGYGIWGALLGRYETWRVAPLSLLVPVVGLASAAVLLGETLTGMQLAGAVLIMAGLYINVFGFRVRRTARVSG</sequence>
<comment type="function">
    <text evidence="1">May be an export pump for several amino acids and their metabolites, including cysteine.</text>
</comment>
<comment type="subcellular location">
    <subcellularLocation>
        <location evidence="1">Cell inner membrane</location>
        <topology evidence="1">Multi-pass membrane protein</topology>
    </subcellularLocation>
</comment>
<comment type="similarity">
    <text evidence="3">Belongs to the EamA transporter family.</text>
</comment>
<comment type="sequence caution" evidence="3">
    <conflict type="erroneous initiation">
        <sequence resource="EMBL-CDS" id="AAL20436"/>
    </conflict>
</comment>
<organism>
    <name type="scientific">Salmonella typhimurium (strain LT2 / SGSC1412 / ATCC 700720)</name>
    <dbReference type="NCBI Taxonomy" id="99287"/>
    <lineage>
        <taxon>Bacteria</taxon>
        <taxon>Pseudomonadati</taxon>
        <taxon>Pseudomonadota</taxon>
        <taxon>Gammaproteobacteria</taxon>
        <taxon>Enterobacterales</taxon>
        <taxon>Enterobacteriaceae</taxon>
        <taxon>Salmonella</taxon>
    </lineage>
</organism>
<accession>Q56072</accession>
<protein>
    <recommendedName>
        <fullName>Probable amino-acid metabolite efflux pump</fullName>
    </recommendedName>
</protein>
<feature type="chain" id="PRO_0000108149" description="Probable amino-acid metabolite efflux pump">
    <location>
        <begin position="1"/>
        <end position="299"/>
    </location>
</feature>
<feature type="topological domain" description="Cytoplasmic" evidence="2">
    <location>
        <begin position="1"/>
        <end position="6"/>
    </location>
</feature>
<feature type="transmembrane region" description="Helical" evidence="2">
    <location>
        <begin position="7"/>
        <end position="27"/>
    </location>
</feature>
<feature type="topological domain" description="Periplasmic" evidence="2">
    <location>
        <begin position="28"/>
        <end position="31"/>
    </location>
</feature>
<feature type="transmembrane region" description="Helical" evidence="2">
    <location>
        <begin position="32"/>
        <end position="52"/>
    </location>
</feature>
<feature type="topological domain" description="Cytoplasmic" evidence="2">
    <location>
        <begin position="53"/>
        <end position="59"/>
    </location>
</feature>
<feature type="transmembrane region" description="Helical" evidence="2">
    <location>
        <begin position="60"/>
        <end position="80"/>
    </location>
</feature>
<feature type="topological domain" description="Periplasmic" evidence="2">
    <location>
        <begin position="81"/>
        <end position="87"/>
    </location>
</feature>
<feature type="transmembrane region" description="Helical" evidence="2">
    <location>
        <begin position="88"/>
        <end position="108"/>
    </location>
</feature>
<feature type="topological domain" description="Cytoplasmic" evidence="2">
    <location>
        <begin position="109"/>
        <end position="116"/>
    </location>
</feature>
<feature type="transmembrane region" description="Helical" evidence="2">
    <location>
        <begin position="117"/>
        <end position="137"/>
    </location>
</feature>
<feature type="topological domain" description="Periplasmic" evidence="2">
    <location>
        <begin position="138"/>
        <end position="139"/>
    </location>
</feature>
<feature type="transmembrane region" description="Helical" evidence="2">
    <location>
        <begin position="140"/>
        <end position="160"/>
    </location>
</feature>
<feature type="topological domain" description="Cytoplasmic" evidence="2">
    <location>
        <begin position="161"/>
        <end position="175"/>
    </location>
</feature>
<feature type="transmembrane region" description="Helical" evidence="2">
    <location>
        <begin position="176"/>
        <end position="196"/>
    </location>
</feature>
<feature type="topological domain" description="Periplasmic" evidence="2">
    <location>
        <begin position="197"/>
        <end position="216"/>
    </location>
</feature>
<feature type="transmembrane region" description="Helical" evidence="2">
    <location>
        <begin position="217"/>
        <end position="237"/>
    </location>
</feature>
<feature type="topological domain" description="Cytoplasmic" evidence="2">
    <location>
        <begin position="238"/>
        <end position="243"/>
    </location>
</feature>
<feature type="transmembrane region" description="Helical" evidence="2">
    <location>
        <begin position="244"/>
        <end position="264"/>
    </location>
</feature>
<feature type="topological domain" description="Periplasmic" evidence="2">
    <location>
        <begin position="265"/>
        <end position="268"/>
    </location>
</feature>
<feature type="transmembrane region" description="Helical" evidence="2">
    <location>
        <begin position="269"/>
        <end position="289"/>
    </location>
</feature>
<feature type="topological domain" description="Cytoplasmic" evidence="2">
    <location>
        <begin position="290"/>
        <end position="299"/>
    </location>
</feature>
<feature type="domain" description="EamA 1">
    <location>
        <begin position="14"/>
        <end position="132"/>
    </location>
</feature>
<feature type="domain" description="EamA 2">
    <location>
        <begin position="153"/>
        <end position="287"/>
    </location>
</feature>
<evidence type="ECO:0000250" key="1"/>
<evidence type="ECO:0000255" key="2"/>
<evidence type="ECO:0000305" key="3"/>